<evidence type="ECO:0000255" key="1"/>
<evidence type="ECO:0000255" key="2">
    <source>
        <dbReference type="HAMAP-Rule" id="MF_04131"/>
    </source>
</evidence>
<evidence type="ECO:0000305" key="3"/>
<feature type="signal peptide" evidence="2">
    <location>
        <begin position="1"/>
        <end position="50"/>
    </location>
</feature>
<feature type="chain" id="PRO_0000149617" description="Outer capsid glycoprotein VP7" evidence="2">
    <location>
        <begin position="51"/>
        <end position="326"/>
    </location>
</feature>
<feature type="region of interest" description="CNP motif; interaction with ITGAV/ITGB3" evidence="2">
    <location>
        <begin position="165"/>
        <end position="167"/>
    </location>
</feature>
<feature type="region of interest" description="LVD motif; interaction with ITGA4/ITGB1 heterodimer" evidence="2">
    <location>
        <begin position="237"/>
        <end position="239"/>
    </location>
</feature>
<feature type="region of interest" description="GPR motif; interaction with ITGAX/ITGB2" evidence="2">
    <location>
        <begin position="253"/>
        <end position="255"/>
    </location>
</feature>
<feature type="binding site" evidence="2">
    <location>
        <position position="95"/>
    </location>
    <ligand>
        <name>Ca(2+)</name>
        <dbReference type="ChEBI" id="CHEBI:29108"/>
        <label>1</label>
    </ligand>
</feature>
<feature type="binding site" evidence="2">
    <location>
        <position position="177"/>
    </location>
    <ligand>
        <name>Ca(2+)</name>
        <dbReference type="ChEBI" id="CHEBI:29108"/>
        <label>2</label>
    </ligand>
</feature>
<feature type="binding site" evidence="2">
    <location>
        <position position="206"/>
    </location>
    <ligand>
        <name>Ca(2+)</name>
        <dbReference type="ChEBI" id="CHEBI:29108"/>
        <label>1</label>
    </ligand>
</feature>
<feature type="binding site" evidence="2">
    <location>
        <position position="214"/>
    </location>
    <ligand>
        <name>Ca(2+)</name>
        <dbReference type="ChEBI" id="CHEBI:29108"/>
        <label>1</label>
    </ligand>
</feature>
<feature type="binding site" evidence="2">
    <location>
        <position position="216"/>
    </location>
    <ligand>
        <name>Ca(2+)</name>
        <dbReference type="ChEBI" id="CHEBI:29108"/>
        <label>1</label>
    </ligand>
</feature>
<feature type="binding site" evidence="2">
    <location>
        <position position="228"/>
    </location>
    <ligand>
        <name>Ca(2+)</name>
        <dbReference type="ChEBI" id="CHEBI:29108"/>
        <label>2</label>
    </ligand>
</feature>
<feature type="binding site" evidence="2">
    <location>
        <position position="229"/>
    </location>
    <ligand>
        <name>Ca(2+)</name>
        <dbReference type="ChEBI" id="CHEBI:29108"/>
        <label>2</label>
    </ligand>
</feature>
<feature type="binding site" evidence="2">
    <location>
        <position position="231"/>
    </location>
    <ligand>
        <name>Ca(2+)</name>
        <dbReference type="ChEBI" id="CHEBI:29108"/>
        <label>2</label>
    </ligand>
</feature>
<feature type="binding site" evidence="2">
    <location>
        <position position="301"/>
    </location>
    <ligand>
        <name>Ca(2+)</name>
        <dbReference type="ChEBI" id="CHEBI:29108"/>
        <label>2</label>
    </ligand>
</feature>
<feature type="glycosylation site" description="N-linked (GlcNAc...) asparagine; by host" evidence="1">
    <location>
        <position position="69"/>
    </location>
</feature>
<feature type="disulfide bond" evidence="2">
    <location>
        <begin position="82"/>
        <end position="135"/>
    </location>
</feature>
<feature type="disulfide bond" evidence="2">
    <location>
        <begin position="165"/>
        <end position="249"/>
    </location>
</feature>
<feature type="disulfide bond" evidence="2">
    <location>
        <begin position="191"/>
        <end position="244"/>
    </location>
</feature>
<feature type="disulfide bond" evidence="2">
    <location>
        <begin position="196"/>
        <end position="207"/>
    </location>
</feature>
<feature type="splice variant" id="VSP_038606" description="In isoform 2." evidence="3">
    <location>
        <begin position="1"/>
        <end position="29"/>
    </location>
</feature>
<organism>
    <name type="scientific">Rotavirus A (isolate RVA/Pig/Australia/BMI-1/1989/G4P9[7])</name>
    <name type="common">RV-A</name>
    <dbReference type="NCBI Taxonomy" id="31580"/>
    <lineage>
        <taxon>Viruses</taxon>
        <taxon>Riboviria</taxon>
        <taxon>Orthornavirae</taxon>
        <taxon>Duplornaviricota</taxon>
        <taxon>Resentoviricetes</taxon>
        <taxon>Reovirales</taxon>
        <taxon>Sedoreoviridae</taxon>
        <taxon>Rotavirus</taxon>
        <taxon>Rotavirus A</taxon>
    </lineage>
</organism>
<proteinExistence type="inferred from homology"/>
<dbReference type="SMR" id="P32549"/>
<dbReference type="GO" id="GO:0044166">
    <property type="term" value="C:host cell endoplasmic reticulum lumen"/>
    <property type="evidence" value="ECO:0007669"/>
    <property type="project" value="UniProtKB-SubCell"/>
</dbReference>
<dbReference type="GO" id="GO:0039621">
    <property type="term" value="C:T=13 icosahedral viral capsid"/>
    <property type="evidence" value="ECO:0007669"/>
    <property type="project" value="UniProtKB-UniRule"/>
</dbReference>
<dbReference type="GO" id="GO:0039624">
    <property type="term" value="C:viral outer capsid"/>
    <property type="evidence" value="ECO:0007669"/>
    <property type="project" value="UniProtKB-UniRule"/>
</dbReference>
<dbReference type="GO" id="GO:0046872">
    <property type="term" value="F:metal ion binding"/>
    <property type="evidence" value="ECO:0007669"/>
    <property type="project" value="UniProtKB-KW"/>
</dbReference>
<dbReference type="Gene3D" id="3.40.50.11130">
    <property type="entry name" value="Glycoprotein VP7, domain 1"/>
    <property type="match status" value="1"/>
</dbReference>
<dbReference type="Gene3D" id="2.60.120.800">
    <property type="entry name" value="Rotavirus outer-layer protein VP7, domain 2"/>
    <property type="match status" value="1"/>
</dbReference>
<dbReference type="HAMAP" id="MF_04130">
    <property type="entry name" value="Rota_VP7"/>
    <property type="match status" value="1"/>
</dbReference>
<dbReference type="HAMAP" id="MF_04131">
    <property type="entry name" value="Rota_VP7_A"/>
    <property type="match status" value="1"/>
</dbReference>
<dbReference type="InterPro" id="IPR001963">
    <property type="entry name" value="VP7"/>
</dbReference>
<dbReference type="InterPro" id="IPR042207">
    <property type="entry name" value="VP7_1"/>
</dbReference>
<dbReference type="InterPro" id="IPR042210">
    <property type="entry name" value="VP7_2"/>
</dbReference>
<dbReference type="Pfam" id="PF00434">
    <property type="entry name" value="VP7"/>
    <property type="match status" value="1"/>
</dbReference>
<reference key="1">
    <citation type="journal article" date="1989" name="Arch. Virol.">
        <title>Comparative sequence analysis of VP7 genes from five Australian porcine rotaviruses.</title>
        <authorList>
            <person name="Huang J.A."/>
            <person name="Nagesha H.S."/>
            <person name="Dyall-Smith M.L."/>
            <person name="Holmes I.H."/>
        </authorList>
    </citation>
    <scope>NUCLEOTIDE SEQUENCE</scope>
</reference>
<accession>P32549</accession>
<organismHost>
    <name type="scientific">Sus scrofa</name>
    <name type="common">Pig</name>
    <dbReference type="NCBI Taxonomy" id="9823"/>
</organismHost>
<protein>
    <recommendedName>
        <fullName evidence="2">Outer capsid glycoprotein VP7</fullName>
    </recommendedName>
</protein>
<name>VP7_ROTPM</name>
<sequence length="326" mass="37191">MYGIEYTTVLFYLISFVFVSYILKTVTKIMDFIIYRITFIIIVLSTLSNAQNYGINLPITGSMDTAYANSTQNDNFLSSTLCLYYPTEARTQINDNEWKDTLSQLFLTKGWPTGSVYFNEYSNILEFSIDPKLYCDYNVVLIKFTSGQELDISELADLILNEWLCNPMDITLYYYQQTGEANKWISMGSSCTVKVCPLNTQTLGIGCQTTNVATFETVADSEKLAIVDVVDSVNHKLDVTSTTCTIRNCNKLGPRENVAIIQVGGSNILDITADPTTSPQIERMMRVNWKKWWQVFYTVVDYINQIVQVMSKRSRSLDSSSFYYRV</sequence>
<comment type="function">
    <text evidence="2">Calcium-binding protein that interacts with rotavirus cell receptors once the initial attachment by VP4 has been achieved. Rotavirus attachment and entry into the host cell probably involves multiple sequential contacts between the outer capsid proteins VP4 and VP7, and the cell receptors. Following entry into the host cell, low intracellular or intravesicular Ca(2+) concentration probably causes the calcium-stabilized VP7 trimers to dissociate from the virion. This step is probably necessary for the membrane-disrupting entry step and the release of VP4, which is locked onto the virion by VP7.</text>
</comment>
<comment type="subunit">
    <text evidence="2">Homotrimer; disulfide-linked. 2 Ca(2+) ions bound at each subunit interface in the trimer hold the trimer together. Interacts with the intermediate capsid protein VP6. Interacts with the outer capsid protein VP5*.</text>
</comment>
<comment type="subcellular location">
    <subcellularLocation>
        <location evidence="2">Virion</location>
    </subcellularLocation>
    <subcellularLocation>
        <location evidence="2">Host endoplasmic reticulum lumen</location>
    </subcellularLocation>
    <text evidence="2">The outer layer contains 780 copies of VP7, grouped as 260 trimers. Immature double-layered particles assembled in the cytoplasm bud across the membrane of the endoplasmic reticulum, acquiring during this process a transient lipid membrane that is modified with the ER resident viral glycoproteins NSP4 and VP7; these enveloped particles also contain VP4. As the particles move towards the interior of the ER cisternae, the transient lipid membrane and the non-structural protein NSP4 are lost, while the virus surface proteins VP4 and VP7 rearrange to form the outermost virus protein layer, yielding mature infectious triple-layered particles.</text>
</comment>
<comment type="alternative products">
    <event type="alternative initiation"/>
    <isoform>
        <id>P32549-1</id>
        <name>1</name>
        <sequence type="displayed"/>
    </isoform>
    <isoform>
        <id>P32549-2</id>
        <name>2</name>
        <sequence type="described" ref="VSP_038606"/>
    </isoform>
</comment>
<comment type="PTM">
    <text evidence="2">N-glycosylated.</text>
</comment>
<comment type="PTM">
    <text evidence="2">The N-terminus is blocked possibly by pyroglutamic acid.</text>
</comment>
<comment type="miscellaneous">
    <text evidence="2">Some rotavirus strains are neuraminidase-sensitive and require sialic acid to attach to the cell surface. Some rotavirus strains are integrin-dependent. Some rotavirus strains depend on ganglioside for their entry into the host cell. Hsp70 also seems to be involved in the entry of some strains.</text>
</comment>
<comment type="miscellaneous">
    <text evidence="2">In group A rotaviruses, VP7 defines the G serotype.</text>
</comment>
<comment type="miscellaneous">
    <molecule>Isoform 2</molecule>
    <text evidence="3">Produced by alternative initiation at Met-30 of isoform 1.</text>
</comment>
<comment type="similarity">
    <text evidence="2">Belongs to the rotavirus VP7 family.</text>
</comment>
<keyword id="KW-0024">Alternative initiation</keyword>
<keyword id="KW-0106">Calcium</keyword>
<keyword id="KW-0167">Capsid protein</keyword>
<keyword id="KW-1015">Disulfide bond</keyword>
<keyword id="KW-0325">Glycoprotein</keyword>
<keyword id="KW-1038">Host endoplasmic reticulum</keyword>
<keyword id="KW-0945">Host-virus interaction</keyword>
<keyword id="KW-0479">Metal-binding</keyword>
<keyword id="KW-1152">Outer capsid protein</keyword>
<keyword id="KW-0732">Signal</keyword>
<keyword id="KW-1146">T=13 icosahedral capsid protein</keyword>
<keyword id="KW-0946">Virion</keyword>